<name>RECX_STAA9</name>
<keyword id="KW-0963">Cytoplasm</keyword>
<dbReference type="EMBL" id="CP000703">
    <property type="protein sequence ID" value="ABQ49712.1"/>
    <property type="molecule type" value="Genomic_DNA"/>
</dbReference>
<dbReference type="RefSeq" id="WP_001124422.1">
    <property type="nucleotide sequence ID" value="NC_009487.1"/>
</dbReference>
<dbReference type="SMR" id="A5IU39"/>
<dbReference type="KEGG" id="saj:SaurJH9_1927"/>
<dbReference type="HOGENOM" id="CLU_066607_4_0_9"/>
<dbReference type="GO" id="GO:0005737">
    <property type="term" value="C:cytoplasm"/>
    <property type="evidence" value="ECO:0007669"/>
    <property type="project" value="UniProtKB-SubCell"/>
</dbReference>
<dbReference type="GO" id="GO:0006282">
    <property type="term" value="P:regulation of DNA repair"/>
    <property type="evidence" value="ECO:0007669"/>
    <property type="project" value="UniProtKB-UniRule"/>
</dbReference>
<dbReference type="Gene3D" id="1.10.10.10">
    <property type="entry name" value="Winged helix-like DNA-binding domain superfamily/Winged helix DNA-binding domain"/>
    <property type="match status" value="4"/>
</dbReference>
<dbReference type="HAMAP" id="MF_01114">
    <property type="entry name" value="RecX"/>
    <property type="match status" value="1"/>
</dbReference>
<dbReference type="InterPro" id="IPR053926">
    <property type="entry name" value="RecX_HTH_1st"/>
</dbReference>
<dbReference type="InterPro" id="IPR053925">
    <property type="entry name" value="RecX_HTH_3rd"/>
</dbReference>
<dbReference type="InterPro" id="IPR003783">
    <property type="entry name" value="Regulatory_RecX"/>
</dbReference>
<dbReference type="InterPro" id="IPR036388">
    <property type="entry name" value="WH-like_DNA-bd_sf"/>
</dbReference>
<dbReference type="NCBIfam" id="NF010733">
    <property type="entry name" value="PRK14135.1"/>
    <property type="match status" value="1"/>
</dbReference>
<dbReference type="PANTHER" id="PTHR33602">
    <property type="entry name" value="REGULATORY PROTEIN RECX FAMILY PROTEIN"/>
    <property type="match status" value="1"/>
</dbReference>
<dbReference type="PANTHER" id="PTHR33602:SF1">
    <property type="entry name" value="REGULATORY PROTEIN RECX FAMILY PROTEIN"/>
    <property type="match status" value="1"/>
</dbReference>
<dbReference type="Pfam" id="PF21982">
    <property type="entry name" value="RecX_HTH1"/>
    <property type="match status" value="1"/>
</dbReference>
<dbReference type="Pfam" id="PF21981">
    <property type="entry name" value="RecX_HTH3"/>
    <property type="match status" value="1"/>
</dbReference>
<reference key="1">
    <citation type="submission" date="2007-05" db="EMBL/GenBank/DDBJ databases">
        <title>Complete sequence of chromosome of Staphylococcus aureus subsp. aureus JH9.</title>
        <authorList>
            <consortium name="US DOE Joint Genome Institute"/>
            <person name="Copeland A."/>
            <person name="Lucas S."/>
            <person name="Lapidus A."/>
            <person name="Barry K."/>
            <person name="Detter J.C."/>
            <person name="Glavina del Rio T."/>
            <person name="Hammon N."/>
            <person name="Israni S."/>
            <person name="Pitluck S."/>
            <person name="Chain P."/>
            <person name="Malfatti S."/>
            <person name="Shin M."/>
            <person name="Vergez L."/>
            <person name="Schmutz J."/>
            <person name="Larimer F."/>
            <person name="Land M."/>
            <person name="Hauser L."/>
            <person name="Kyrpides N."/>
            <person name="Kim E."/>
            <person name="Tomasz A."/>
            <person name="Richardson P."/>
        </authorList>
    </citation>
    <scope>NUCLEOTIDE SEQUENCE [LARGE SCALE GENOMIC DNA]</scope>
    <source>
        <strain>JH9</strain>
    </source>
</reference>
<sequence>MPKITKIEVQKKNKERFNLFLDEQFEMGIDIDTLVKFNLKKGQQLEAADMAEIQKYDHYRIGLNKAIQYLSYKKRTEKEVIQYLQKEEISEQAISEVIEYCYREKLIDHQDYAESLKNTMIRTTDKGPKIYQQKLYQLGIEPNIIEMFTELYREQQELDDIIQIAEKISKTKKGPQNKVKEKVMQSLIQKGFEMETIHAVLNEMDFTQDEAVLDDLLQRDLEKIYNKNRKKYTQQKLISKTIEGLMRKGYKYDKIKAKLEESGIADGTEEIE</sequence>
<organism>
    <name type="scientific">Staphylococcus aureus (strain JH9)</name>
    <dbReference type="NCBI Taxonomy" id="359786"/>
    <lineage>
        <taxon>Bacteria</taxon>
        <taxon>Bacillati</taxon>
        <taxon>Bacillota</taxon>
        <taxon>Bacilli</taxon>
        <taxon>Bacillales</taxon>
        <taxon>Staphylococcaceae</taxon>
        <taxon>Staphylococcus</taxon>
    </lineage>
</organism>
<evidence type="ECO:0000255" key="1">
    <source>
        <dbReference type="HAMAP-Rule" id="MF_01114"/>
    </source>
</evidence>
<protein>
    <recommendedName>
        <fullName evidence="1">Regulatory protein RecX</fullName>
    </recommendedName>
</protein>
<proteinExistence type="inferred from homology"/>
<accession>A5IU39</accession>
<feature type="chain" id="PRO_1000084991" description="Regulatory protein RecX">
    <location>
        <begin position="1"/>
        <end position="272"/>
    </location>
</feature>
<gene>
    <name evidence="1" type="primary">recX</name>
    <name type="ordered locus">SaurJH9_1927</name>
</gene>
<comment type="function">
    <text evidence="1">Modulates RecA activity.</text>
</comment>
<comment type="subcellular location">
    <subcellularLocation>
        <location evidence="1">Cytoplasm</location>
    </subcellularLocation>
</comment>
<comment type="similarity">
    <text evidence="1">Belongs to the RecX family.</text>
</comment>